<feature type="chain" id="PRO_0000354721" description="Catalase-peroxidase">
    <location>
        <begin position="1"/>
        <end position="735"/>
    </location>
</feature>
<feature type="active site" description="Proton acceptor" evidence="1">
    <location>
        <position position="96"/>
    </location>
</feature>
<feature type="binding site" description="axial binding residue" evidence="1">
    <location>
        <position position="264"/>
    </location>
    <ligand>
        <name>heme b</name>
        <dbReference type="ChEBI" id="CHEBI:60344"/>
    </ligand>
    <ligandPart>
        <name>Fe</name>
        <dbReference type="ChEBI" id="CHEBI:18248"/>
    </ligandPart>
</feature>
<feature type="site" description="Transition state stabilizer" evidence="1">
    <location>
        <position position="92"/>
    </location>
</feature>
<feature type="cross-link" description="Tryptophyl-tyrosyl-methioninium (Trp-Tyr) (with M-249)" evidence="1">
    <location>
        <begin position="95"/>
        <end position="223"/>
    </location>
</feature>
<feature type="cross-link" description="Tryptophyl-tyrosyl-methioninium (Tyr-Met) (with W-95)" evidence="1">
    <location>
        <begin position="223"/>
        <end position="249"/>
    </location>
</feature>
<dbReference type="EC" id="1.11.1.21" evidence="1"/>
<dbReference type="EMBL" id="CP000361">
    <property type="protein sequence ID" value="ABV67797.1"/>
    <property type="molecule type" value="Genomic_DNA"/>
</dbReference>
<dbReference type="RefSeq" id="WP_012013181.1">
    <property type="nucleotide sequence ID" value="NC_009850.1"/>
</dbReference>
<dbReference type="SMR" id="A8EV24"/>
<dbReference type="STRING" id="367737.Abu_1548"/>
<dbReference type="GeneID" id="24305679"/>
<dbReference type="KEGG" id="abu:Abu_1548"/>
<dbReference type="eggNOG" id="COG0376">
    <property type="taxonomic scope" value="Bacteria"/>
</dbReference>
<dbReference type="HOGENOM" id="CLU_025424_2_0_7"/>
<dbReference type="Proteomes" id="UP000001136">
    <property type="component" value="Chromosome"/>
</dbReference>
<dbReference type="GO" id="GO:0005829">
    <property type="term" value="C:cytosol"/>
    <property type="evidence" value="ECO:0007669"/>
    <property type="project" value="TreeGrafter"/>
</dbReference>
<dbReference type="GO" id="GO:0004096">
    <property type="term" value="F:catalase activity"/>
    <property type="evidence" value="ECO:0007669"/>
    <property type="project" value="UniProtKB-UniRule"/>
</dbReference>
<dbReference type="GO" id="GO:0020037">
    <property type="term" value="F:heme binding"/>
    <property type="evidence" value="ECO:0007669"/>
    <property type="project" value="InterPro"/>
</dbReference>
<dbReference type="GO" id="GO:0046872">
    <property type="term" value="F:metal ion binding"/>
    <property type="evidence" value="ECO:0007669"/>
    <property type="project" value="UniProtKB-KW"/>
</dbReference>
<dbReference type="GO" id="GO:0070301">
    <property type="term" value="P:cellular response to hydrogen peroxide"/>
    <property type="evidence" value="ECO:0007669"/>
    <property type="project" value="TreeGrafter"/>
</dbReference>
<dbReference type="GO" id="GO:0042744">
    <property type="term" value="P:hydrogen peroxide catabolic process"/>
    <property type="evidence" value="ECO:0007669"/>
    <property type="project" value="UniProtKB-KW"/>
</dbReference>
<dbReference type="CDD" id="cd00649">
    <property type="entry name" value="catalase_peroxidase_1"/>
    <property type="match status" value="1"/>
</dbReference>
<dbReference type="CDD" id="cd08200">
    <property type="entry name" value="catalase_peroxidase_2"/>
    <property type="match status" value="1"/>
</dbReference>
<dbReference type="FunFam" id="1.10.420.10:FF:000002">
    <property type="entry name" value="Catalase-peroxidase"/>
    <property type="match status" value="1"/>
</dbReference>
<dbReference type="FunFam" id="1.10.420.10:FF:000004">
    <property type="entry name" value="Catalase-peroxidase"/>
    <property type="match status" value="1"/>
</dbReference>
<dbReference type="FunFam" id="1.10.520.10:FF:000002">
    <property type="entry name" value="Catalase-peroxidase"/>
    <property type="match status" value="1"/>
</dbReference>
<dbReference type="Gene3D" id="1.10.520.10">
    <property type="match status" value="2"/>
</dbReference>
<dbReference type="Gene3D" id="1.10.420.10">
    <property type="entry name" value="Peroxidase, domain 2"/>
    <property type="match status" value="2"/>
</dbReference>
<dbReference type="HAMAP" id="MF_01961">
    <property type="entry name" value="Catal_peroxid"/>
    <property type="match status" value="1"/>
</dbReference>
<dbReference type="InterPro" id="IPR000763">
    <property type="entry name" value="Catalase_peroxidase"/>
</dbReference>
<dbReference type="InterPro" id="IPR002016">
    <property type="entry name" value="Haem_peroxidase"/>
</dbReference>
<dbReference type="InterPro" id="IPR010255">
    <property type="entry name" value="Haem_peroxidase_sf"/>
</dbReference>
<dbReference type="InterPro" id="IPR019794">
    <property type="entry name" value="Peroxidases_AS"/>
</dbReference>
<dbReference type="NCBIfam" id="TIGR00198">
    <property type="entry name" value="cat_per_HPI"/>
    <property type="match status" value="1"/>
</dbReference>
<dbReference type="NCBIfam" id="NF011635">
    <property type="entry name" value="PRK15061.1"/>
    <property type="match status" value="1"/>
</dbReference>
<dbReference type="PANTHER" id="PTHR30555:SF0">
    <property type="entry name" value="CATALASE-PEROXIDASE"/>
    <property type="match status" value="1"/>
</dbReference>
<dbReference type="PANTHER" id="PTHR30555">
    <property type="entry name" value="HYDROPEROXIDASE I, BIFUNCTIONAL CATALASE-PEROXIDASE"/>
    <property type="match status" value="1"/>
</dbReference>
<dbReference type="Pfam" id="PF00141">
    <property type="entry name" value="peroxidase"/>
    <property type="match status" value="2"/>
</dbReference>
<dbReference type="PRINTS" id="PR00460">
    <property type="entry name" value="BPEROXIDASE"/>
</dbReference>
<dbReference type="PRINTS" id="PR00458">
    <property type="entry name" value="PEROXIDASE"/>
</dbReference>
<dbReference type="SUPFAM" id="SSF48113">
    <property type="entry name" value="Heme-dependent peroxidases"/>
    <property type="match status" value="2"/>
</dbReference>
<dbReference type="PROSITE" id="PS00436">
    <property type="entry name" value="PEROXIDASE_2"/>
    <property type="match status" value="1"/>
</dbReference>
<dbReference type="PROSITE" id="PS50873">
    <property type="entry name" value="PEROXIDASE_4"/>
    <property type="match status" value="1"/>
</dbReference>
<gene>
    <name evidence="1" type="primary">katG</name>
    <name type="ordered locus">Abu_1548</name>
</gene>
<sequence length="735" mass="81448">MAGKCPMGFGTTNPMVRNGGTSNKDWWPNQLNLKILSQHSNKVNPLGSDFDYAKEFSKLDYDALKADLTALMTDSQDWWPADYGHYGPLFIRMAWHSAGTYRTGDGRGGASTGSQRLAPLNSWPDNANLDKARRLLWPIKQKYGNKISWADLMILAGNVALESMGLKTFGFSGGRVDVWEPEEDIYWGKEAQWLATSDKENSRYSGDRDLENPLAAVQMGLIYVNPEGPDGVPDPIKSGIDIRETFARMAMDDEETVALTAGGHTFGKCHGAGDAANVGAEPEAEGLVAQGLGWLSKFLSGKGDDTITSGIEGSWTANPTRWDNEYFDILLSYDWELTKSPAGAWQWIPKNPKEEHLAPAAHDKTKKVTTIMTTADMAMKMDPIYAKISKRFHENPQEFADAFARAWFKLTHRDLGPKSKYIGPEIPKEDLIWQDPIPPINYEIIDEKDIEILKEKLLSSSLGVSKLVSLAWASASTYRDSDKRGGANGARIALEPQRSWESNSYLNLDESLKILETIKGEFNSSNSNKKVSLADLIVLGGCAAVEKAAKDAGFNIKVPFTAGRADATQEQTHVESFSHLEPIADGFRNYSKAKYTLSTEELLIDKAQLLSLTIPEMIVLVGGMRVLGANYANSDLGVFTSNVGVLSNDFFVNLLDMKTAWYPTTQEEDSFVGKDRQSGSMKYSASRVDLLFGSNSQLRAVSEVYAQEDSKEKFVQDFINAWTKVMNLDRFDIKK</sequence>
<comment type="function">
    <text evidence="1">Bifunctional enzyme with both catalase and broad-spectrum peroxidase activity.</text>
</comment>
<comment type="catalytic activity">
    <reaction evidence="1">
        <text>H2O2 + AH2 = A + 2 H2O</text>
        <dbReference type="Rhea" id="RHEA:30275"/>
        <dbReference type="ChEBI" id="CHEBI:13193"/>
        <dbReference type="ChEBI" id="CHEBI:15377"/>
        <dbReference type="ChEBI" id="CHEBI:16240"/>
        <dbReference type="ChEBI" id="CHEBI:17499"/>
        <dbReference type="EC" id="1.11.1.21"/>
    </reaction>
</comment>
<comment type="catalytic activity">
    <reaction evidence="1">
        <text>2 H2O2 = O2 + 2 H2O</text>
        <dbReference type="Rhea" id="RHEA:20309"/>
        <dbReference type="ChEBI" id="CHEBI:15377"/>
        <dbReference type="ChEBI" id="CHEBI:15379"/>
        <dbReference type="ChEBI" id="CHEBI:16240"/>
        <dbReference type="EC" id="1.11.1.21"/>
    </reaction>
</comment>
<comment type="cofactor">
    <cofactor evidence="1">
        <name>heme b</name>
        <dbReference type="ChEBI" id="CHEBI:60344"/>
    </cofactor>
    <text evidence="1">Binds 1 heme b (iron(II)-protoporphyrin IX) group per dimer.</text>
</comment>
<comment type="subunit">
    <text evidence="1">Homodimer or homotetramer.</text>
</comment>
<comment type="PTM">
    <text evidence="1">Formation of the three residue Trp-Tyr-Met cross-link is important for the catalase, but not the peroxidase activity of the enzyme.</text>
</comment>
<comment type="similarity">
    <text evidence="1">Belongs to the peroxidase family. Peroxidase/catalase subfamily.</text>
</comment>
<name>KATG_ALIB4</name>
<evidence type="ECO:0000255" key="1">
    <source>
        <dbReference type="HAMAP-Rule" id="MF_01961"/>
    </source>
</evidence>
<reference key="1">
    <citation type="journal article" date="2007" name="PLoS ONE">
        <title>The complete genome sequence and analysis of the Epsilonproteobacterium Arcobacter butzleri.</title>
        <authorList>
            <person name="Miller W.G."/>
            <person name="Parker C.T."/>
            <person name="Rubenfield M."/>
            <person name="Mendz G.L."/>
            <person name="Woesten M.M.S.M."/>
            <person name="Ussery D.W."/>
            <person name="Stolz J.F."/>
            <person name="Binnewies T.T."/>
            <person name="Hallin P.F."/>
            <person name="Wang G."/>
            <person name="Malek J.A."/>
            <person name="Rogosin A."/>
            <person name="Stanker L.H."/>
            <person name="Mandrell R.E."/>
        </authorList>
    </citation>
    <scope>NUCLEOTIDE SEQUENCE [LARGE SCALE GENOMIC DNA]</scope>
    <source>
        <strain>RM4018</strain>
    </source>
</reference>
<organism>
    <name type="scientific">Aliarcobacter butzleri (strain RM4018)</name>
    <name type="common">Arcobacter butzleri</name>
    <dbReference type="NCBI Taxonomy" id="367737"/>
    <lineage>
        <taxon>Bacteria</taxon>
        <taxon>Pseudomonadati</taxon>
        <taxon>Campylobacterota</taxon>
        <taxon>Epsilonproteobacteria</taxon>
        <taxon>Campylobacterales</taxon>
        <taxon>Arcobacteraceae</taxon>
        <taxon>Aliarcobacter</taxon>
    </lineage>
</organism>
<proteinExistence type="inferred from homology"/>
<accession>A8EV24</accession>
<keyword id="KW-0349">Heme</keyword>
<keyword id="KW-0376">Hydrogen peroxide</keyword>
<keyword id="KW-0408">Iron</keyword>
<keyword id="KW-0479">Metal-binding</keyword>
<keyword id="KW-0560">Oxidoreductase</keyword>
<keyword id="KW-0575">Peroxidase</keyword>
<keyword id="KW-1185">Reference proteome</keyword>
<protein>
    <recommendedName>
        <fullName evidence="1">Catalase-peroxidase</fullName>
        <shortName evidence="1">CP</shortName>
        <ecNumber evidence="1">1.11.1.21</ecNumber>
    </recommendedName>
    <alternativeName>
        <fullName evidence="1">Peroxidase/catalase</fullName>
    </alternativeName>
</protein>